<reference key="1">
    <citation type="journal article" date="2003" name="Genome Res.">
        <title>Comparative genome analysis of Vibrio vulnificus, a marine pathogen.</title>
        <authorList>
            <person name="Chen C.-Y."/>
            <person name="Wu K.-M."/>
            <person name="Chang Y.-C."/>
            <person name="Chang C.-H."/>
            <person name="Tsai H.-C."/>
            <person name="Liao T.-L."/>
            <person name="Liu Y.-M."/>
            <person name="Chen H.-J."/>
            <person name="Shen A.B.-T."/>
            <person name="Li J.-C."/>
            <person name="Su T.-L."/>
            <person name="Shao C.-P."/>
            <person name="Lee C.-T."/>
            <person name="Hor L.-I."/>
            <person name="Tsai S.-F."/>
        </authorList>
    </citation>
    <scope>NUCLEOTIDE SEQUENCE [LARGE SCALE GENOMIC DNA]</scope>
    <source>
        <strain>YJ016</strain>
    </source>
</reference>
<gene>
    <name evidence="1" type="primary">kdsB</name>
    <name type="ordered locus">VV2353</name>
</gene>
<organism>
    <name type="scientific">Vibrio vulnificus (strain YJ016)</name>
    <dbReference type="NCBI Taxonomy" id="196600"/>
    <lineage>
        <taxon>Bacteria</taxon>
        <taxon>Pseudomonadati</taxon>
        <taxon>Pseudomonadota</taxon>
        <taxon>Gammaproteobacteria</taxon>
        <taxon>Vibrionales</taxon>
        <taxon>Vibrionaceae</taxon>
        <taxon>Vibrio</taxon>
    </lineage>
</organism>
<sequence length="251" mass="27514">MSFTVVIPARYQSTRLPGKPLADIAGKPMVQWVYEQAIQAGAQDVIIATDDQRVADAVAVFGGKVCMTSPNHESGTERLAEVVQLMGIADDHIVVNVQGDEPLIPPSIIRQVAENLAASSAPMATLGVAITSEEEVFNPNAVKVVTDKEGYALYFSRATIPWDRDAFARGEVLTEHSLMRHIGIYAYRAGFINTYVNWQPSSLEKIECLEQLRVLWYGEKIHVELAKEAPPAGVDTPEDLELVRKIIAAKS</sequence>
<name>KDSB_VIBVY</name>
<accession>Q7MJ10</accession>
<evidence type="ECO:0000255" key="1">
    <source>
        <dbReference type="HAMAP-Rule" id="MF_00057"/>
    </source>
</evidence>
<comment type="function">
    <text evidence="1">Activates KDO (a required 8-carbon sugar) for incorporation into bacterial lipopolysaccharide in Gram-negative bacteria.</text>
</comment>
<comment type="catalytic activity">
    <reaction evidence="1">
        <text>3-deoxy-alpha-D-manno-oct-2-ulosonate + CTP = CMP-3-deoxy-beta-D-manno-octulosonate + diphosphate</text>
        <dbReference type="Rhea" id="RHEA:23448"/>
        <dbReference type="ChEBI" id="CHEBI:33019"/>
        <dbReference type="ChEBI" id="CHEBI:37563"/>
        <dbReference type="ChEBI" id="CHEBI:85986"/>
        <dbReference type="ChEBI" id="CHEBI:85987"/>
        <dbReference type="EC" id="2.7.7.38"/>
    </reaction>
</comment>
<comment type="pathway">
    <text evidence="1">Nucleotide-sugar biosynthesis; CMP-3-deoxy-D-manno-octulosonate biosynthesis; CMP-3-deoxy-D-manno-octulosonate from 3-deoxy-D-manno-octulosonate and CTP: step 1/1.</text>
</comment>
<comment type="pathway">
    <text evidence="1">Bacterial outer membrane biogenesis; lipopolysaccharide biosynthesis.</text>
</comment>
<comment type="subcellular location">
    <subcellularLocation>
        <location evidence="1">Cytoplasm</location>
    </subcellularLocation>
</comment>
<comment type="similarity">
    <text evidence="1">Belongs to the KdsB family.</text>
</comment>
<feature type="chain" id="PRO_0000188520" description="3-deoxy-manno-octulosonate cytidylyltransferase">
    <location>
        <begin position="1"/>
        <end position="251"/>
    </location>
</feature>
<proteinExistence type="inferred from homology"/>
<protein>
    <recommendedName>
        <fullName evidence="1">3-deoxy-manno-octulosonate cytidylyltransferase</fullName>
        <ecNumber evidence="1">2.7.7.38</ecNumber>
    </recommendedName>
    <alternativeName>
        <fullName evidence="1">CMP-2-keto-3-deoxyoctulosonic acid synthase</fullName>
        <shortName evidence="1">CKS</shortName>
        <shortName evidence="1">CMP-KDO synthase</shortName>
    </alternativeName>
</protein>
<keyword id="KW-0963">Cytoplasm</keyword>
<keyword id="KW-0448">Lipopolysaccharide biosynthesis</keyword>
<keyword id="KW-0548">Nucleotidyltransferase</keyword>
<keyword id="KW-0808">Transferase</keyword>
<dbReference type="EC" id="2.7.7.38" evidence="1"/>
<dbReference type="EMBL" id="BA000037">
    <property type="protein sequence ID" value="BAC95117.1"/>
    <property type="molecule type" value="Genomic_DNA"/>
</dbReference>
<dbReference type="RefSeq" id="WP_011150831.1">
    <property type="nucleotide sequence ID" value="NC_005139.1"/>
</dbReference>
<dbReference type="SMR" id="Q7MJ10"/>
<dbReference type="STRING" id="672.VV93_v1c20630"/>
<dbReference type="KEGG" id="vvy:VV2353"/>
<dbReference type="PATRIC" id="fig|196600.6.peg.2363"/>
<dbReference type="eggNOG" id="COG1212">
    <property type="taxonomic scope" value="Bacteria"/>
</dbReference>
<dbReference type="HOGENOM" id="CLU_065038_1_0_6"/>
<dbReference type="UniPathway" id="UPA00030"/>
<dbReference type="UniPathway" id="UPA00358">
    <property type="reaction ID" value="UER00476"/>
</dbReference>
<dbReference type="Proteomes" id="UP000002675">
    <property type="component" value="Chromosome I"/>
</dbReference>
<dbReference type="GO" id="GO:0005829">
    <property type="term" value="C:cytosol"/>
    <property type="evidence" value="ECO:0007669"/>
    <property type="project" value="TreeGrafter"/>
</dbReference>
<dbReference type="GO" id="GO:0008690">
    <property type="term" value="F:3-deoxy-manno-octulosonate cytidylyltransferase activity"/>
    <property type="evidence" value="ECO:0007669"/>
    <property type="project" value="UniProtKB-UniRule"/>
</dbReference>
<dbReference type="GO" id="GO:0033468">
    <property type="term" value="P:CMP-keto-3-deoxy-D-manno-octulosonic acid biosynthetic process"/>
    <property type="evidence" value="ECO:0007669"/>
    <property type="project" value="UniProtKB-UniRule"/>
</dbReference>
<dbReference type="GO" id="GO:0009103">
    <property type="term" value="P:lipopolysaccharide biosynthetic process"/>
    <property type="evidence" value="ECO:0007669"/>
    <property type="project" value="UniProtKB-UniRule"/>
</dbReference>
<dbReference type="CDD" id="cd02517">
    <property type="entry name" value="CMP-KDO-Synthetase"/>
    <property type="match status" value="1"/>
</dbReference>
<dbReference type="FunFam" id="3.90.550.10:FF:000011">
    <property type="entry name" value="3-deoxy-manno-octulosonate cytidylyltransferase"/>
    <property type="match status" value="1"/>
</dbReference>
<dbReference type="Gene3D" id="3.90.550.10">
    <property type="entry name" value="Spore Coat Polysaccharide Biosynthesis Protein SpsA, Chain A"/>
    <property type="match status" value="1"/>
</dbReference>
<dbReference type="HAMAP" id="MF_00057">
    <property type="entry name" value="KdsB"/>
    <property type="match status" value="1"/>
</dbReference>
<dbReference type="InterPro" id="IPR003329">
    <property type="entry name" value="Cytidylyl_trans"/>
</dbReference>
<dbReference type="InterPro" id="IPR004528">
    <property type="entry name" value="KdsB"/>
</dbReference>
<dbReference type="InterPro" id="IPR029044">
    <property type="entry name" value="Nucleotide-diphossugar_trans"/>
</dbReference>
<dbReference type="NCBIfam" id="TIGR00466">
    <property type="entry name" value="kdsB"/>
    <property type="match status" value="1"/>
</dbReference>
<dbReference type="NCBIfam" id="NF003950">
    <property type="entry name" value="PRK05450.1-3"/>
    <property type="match status" value="1"/>
</dbReference>
<dbReference type="NCBIfam" id="NF003952">
    <property type="entry name" value="PRK05450.1-5"/>
    <property type="match status" value="1"/>
</dbReference>
<dbReference type="NCBIfam" id="NF009905">
    <property type="entry name" value="PRK13368.1"/>
    <property type="match status" value="1"/>
</dbReference>
<dbReference type="PANTHER" id="PTHR42866">
    <property type="entry name" value="3-DEOXY-MANNO-OCTULOSONATE CYTIDYLYLTRANSFERASE"/>
    <property type="match status" value="1"/>
</dbReference>
<dbReference type="PANTHER" id="PTHR42866:SF2">
    <property type="entry name" value="3-DEOXY-MANNO-OCTULOSONATE CYTIDYLYLTRANSFERASE, MITOCHONDRIAL"/>
    <property type="match status" value="1"/>
</dbReference>
<dbReference type="Pfam" id="PF02348">
    <property type="entry name" value="CTP_transf_3"/>
    <property type="match status" value="1"/>
</dbReference>
<dbReference type="SUPFAM" id="SSF53448">
    <property type="entry name" value="Nucleotide-diphospho-sugar transferases"/>
    <property type="match status" value="1"/>
</dbReference>